<feature type="chain" id="PRO_0000434467" description="UDP-glycosyltransferase 79A2">
    <location>
        <begin position="1"/>
        <end position="454"/>
    </location>
</feature>
<feature type="binding site" evidence="2">
    <location>
        <position position="269"/>
    </location>
    <ligand>
        <name>UDP-alpha-D-glucose</name>
        <dbReference type="ChEBI" id="CHEBI:58885"/>
    </ligand>
</feature>
<feature type="binding site" evidence="2">
    <location>
        <begin position="330"/>
        <end position="331"/>
    </location>
    <ligand>
        <name>UDP-alpha-D-glucose</name>
        <dbReference type="ChEBI" id="CHEBI:58885"/>
    </ligand>
</feature>
<feature type="binding site" evidence="2">
    <location>
        <begin position="348"/>
        <end position="356"/>
    </location>
    <ligand>
        <name>UDP-alpha-D-glucose</name>
        <dbReference type="ChEBI" id="CHEBI:58885"/>
    </ligand>
</feature>
<feature type="binding site" evidence="2">
    <location>
        <begin position="370"/>
        <end position="373"/>
    </location>
    <ligand>
        <name>UDP-alpha-D-glucose</name>
        <dbReference type="ChEBI" id="CHEBI:58885"/>
    </ligand>
</feature>
<name>U79A2_STERE</name>
<reference key="1">
    <citation type="journal article" date="2005" name="Plant J.">
        <title>Functional genomics uncovers three glucosyltransferases involved in the synthesis of the major sweet glucosides of Stevia rebaudiana.</title>
        <authorList>
            <person name="Richman A."/>
            <person name="Swanson A."/>
            <person name="Humphrey T."/>
            <person name="Chapman R."/>
            <person name="McGarvey B."/>
            <person name="Pocs R."/>
            <person name="Brandle J."/>
        </authorList>
    </citation>
    <scope>NUCLEOTIDE SEQUENCE [MRNA]</scope>
    <source>
        <tissue>Leaf</tissue>
    </source>
</reference>
<protein>
    <recommendedName>
        <fullName evidence="3">UDP-glycosyltransferase 79A2</fullName>
        <ecNumber evidence="4">2.4.1.-</ecNumber>
    </recommendedName>
</protein>
<comment type="function">
    <text evidence="1">May glycosylate diterpenes or flavonols in leaves.</text>
</comment>
<comment type="similarity">
    <text evidence="4">Belongs to the UDP-glycosyltransferase family.</text>
</comment>
<evidence type="ECO:0000250" key="1">
    <source>
        <dbReference type="UniProtKB" id="Q6VAA6"/>
    </source>
</evidence>
<evidence type="ECO:0000250" key="2">
    <source>
        <dbReference type="UniProtKB" id="Q9M156"/>
    </source>
</evidence>
<evidence type="ECO:0000303" key="3">
    <source>
    </source>
</evidence>
<evidence type="ECO:0000305" key="4"/>
<proteinExistence type="evidence at transcript level"/>
<gene>
    <name evidence="3" type="primary">UGT79A2</name>
</gene>
<dbReference type="EC" id="2.4.1.-" evidence="4"/>
<dbReference type="EMBL" id="AY345985">
    <property type="protein sequence ID" value="AAR06923.1"/>
    <property type="molecule type" value="mRNA"/>
</dbReference>
<dbReference type="SMR" id="Q6VAA3"/>
<dbReference type="GO" id="GO:0035251">
    <property type="term" value="F:UDP-glucosyltransferase activity"/>
    <property type="evidence" value="ECO:0007669"/>
    <property type="project" value="InterPro"/>
</dbReference>
<dbReference type="CDD" id="cd03784">
    <property type="entry name" value="GT1_Gtf-like"/>
    <property type="match status" value="1"/>
</dbReference>
<dbReference type="FunFam" id="3.40.50.2000:FF:000037">
    <property type="entry name" value="Glycosyltransferase"/>
    <property type="match status" value="1"/>
</dbReference>
<dbReference type="Gene3D" id="3.40.50.2000">
    <property type="entry name" value="Glycogen Phosphorylase B"/>
    <property type="match status" value="2"/>
</dbReference>
<dbReference type="InterPro" id="IPR050481">
    <property type="entry name" value="UDP-glycosyltransf_plant"/>
</dbReference>
<dbReference type="InterPro" id="IPR002213">
    <property type="entry name" value="UDP_glucos_trans"/>
</dbReference>
<dbReference type="PANTHER" id="PTHR48049">
    <property type="entry name" value="GLYCOSYLTRANSFERASE"/>
    <property type="match status" value="1"/>
</dbReference>
<dbReference type="PANTHER" id="PTHR48049:SF84">
    <property type="entry name" value="UDP-GLYCOSYLTRANSFERASE 79A6"/>
    <property type="match status" value="1"/>
</dbReference>
<dbReference type="Pfam" id="PF00201">
    <property type="entry name" value="UDPGT"/>
    <property type="match status" value="1"/>
</dbReference>
<dbReference type="SUPFAM" id="SSF53756">
    <property type="entry name" value="UDP-Glycosyltransferase/glycogen phosphorylase"/>
    <property type="match status" value="1"/>
</dbReference>
<sequence length="454" mass="50875">MSLKGNDKELHLVMFPFFAFGHITPFVQLSNKISSLYPGVKITFLAASASVSRIETMLNPSTNTKVIPLTLPRVDGLPEGVENTADASPATIGLLVVAIDLMQPQIKTLLANLKPDFVIFDFVHWWLPEIASELGIKTIYFSVYMANIVMPSTSKLTGNKPSTVEDIKALQQSYGIPVKTFEAISLMNVFKSFHDWMDKCINGCNLMLIKSCREMEGSRIDDVTKQSTRPVFLIGPVVPEPHSGELDETWANWLNRFPAKSVIYCSFGSETFLTDDQIRELALGLELTGLPFFLVLNFPANVDKSAELKRTLPDGFLERVKDKGIVHSGWVQQRHILAHDSVGCYVFHAGYGSVIEGLVNDCQLVMLPMKVDQFTNSKVIALELKAGVEVNRRDEDGYFGKDDVFEAVESVMMDTENEPAKSIRENHRKLKEFLQNDEIQKKYIADFVENLKAL</sequence>
<keyword id="KW-0808">Transferase</keyword>
<accession>Q6VAA3</accession>
<organism>
    <name type="scientific">Stevia rebaudiana</name>
    <name type="common">Stevia</name>
    <name type="synonym">Eupatorium rebaudianum</name>
    <dbReference type="NCBI Taxonomy" id="55670"/>
    <lineage>
        <taxon>Eukaryota</taxon>
        <taxon>Viridiplantae</taxon>
        <taxon>Streptophyta</taxon>
        <taxon>Embryophyta</taxon>
        <taxon>Tracheophyta</taxon>
        <taxon>Spermatophyta</taxon>
        <taxon>Magnoliopsida</taxon>
        <taxon>eudicotyledons</taxon>
        <taxon>Gunneridae</taxon>
        <taxon>Pentapetalae</taxon>
        <taxon>asterids</taxon>
        <taxon>campanulids</taxon>
        <taxon>Asterales</taxon>
        <taxon>Asteraceae</taxon>
        <taxon>Asteroideae</taxon>
        <taxon>Heliantheae alliance</taxon>
        <taxon>Eupatorieae</taxon>
        <taxon>Stevia</taxon>
    </lineage>
</organism>